<keyword id="KW-0131">Cell cycle</keyword>
<keyword id="KW-0132">Cell division</keyword>
<keyword id="KW-0997">Cell inner membrane</keyword>
<keyword id="KW-1003">Cell membrane</keyword>
<keyword id="KW-0133">Cell shape</keyword>
<keyword id="KW-0961">Cell wall biogenesis/degradation</keyword>
<keyword id="KW-0328">Glycosyltransferase</keyword>
<keyword id="KW-0472">Membrane</keyword>
<keyword id="KW-0573">Peptidoglycan synthesis</keyword>
<keyword id="KW-1185">Reference proteome</keyword>
<keyword id="KW-0808">Transferase</keyword>
<keyword id="KW-0812">Transmembrane</keyword>
<keyword id="KW-1133">Transmembrane helix</keyword>
<gene>
    <name evidence="1" type="primary">ftsW</name>
    <name type="ordered locus">ABO_0597</name>
</gene>
<dbReference type="EC" id="2.4.99.28" evidence="1"/>
<dbReference type="EMBL" id="AM286690">
    <property type="protein sequence ID" value="CAL16045.1"/>
    <property type="molecule type" value="Genomic_DNA"/>
</dbReference>
<dbReference type="RefSeq" id="WP_011587883.1">
    <property type="nucleotide sequence ID" value="NC_008260.1"/>
</dbReference>
<dbReference type="SMR" id="Q0VS03"/>
<dbReference type="STRING" id="393595.ABO_0597"/>
<dbReference type="KEGG" id="abo:ABO_0597"/>
<dbReference type="eggNOG" id="COG0772">
    <property type="taxonomic scope" value="Bacteria"/>
</dbReference>
<dbReference type="HOGENOM" id="CLU_029243_1_1_6"/>
<dbReference type="OrthoDB" id="9768187at2"/>
<dbReference type="UniPathway" id="UPA00219"/>
<dbReference type="Proteomes" id="UP000008871">
    <property type="component" value="Chromosome"/>
</dbReference>
<dbReference type="GO" id="GO:0032153">
    <property type="term" value="C:cell division site"/>
    <property type="evidence" value="ECO:0007669"/>
    <property type="project" value="UniProtKB-UniRule"/>
</dbReference>
<dbReference type="GO" id="GO:0005886">
    <property type="term" value="C:plasma membrane"/>
    <property type="evidence" value="ECO:0007669"/>
    <property type="project" value="UniProtKB-SubCell"/>
</dbReference>
<dbReference type="GO" id="GO:0015648">
    <property type="term" value="F:lipid-linked peptidoglycan transporter activity"/>
    <property type="evidence" value="ECO:0007669"/>
    <property type="project" value="TreeGrafter"/>
</dbReference>
<dbReference type="GO" id="GO:0008955">
    <property type="term" value="F:peptidoglycan glycosyltransferase activity"/>
    <property type="evidence" value="ECO:0007669"/>
    <property type="project" value="UniProtKB-UniRule"/>
</dbReference>
<dbReference type="GO" id="GO:0071555">
    <property type="term" value="P:cell wall organization"/>
    <property type="evidence" value="ECO:0007669"/>
    <property type="project" value="UniProtKB-KW"/>
</dbReference>
<dbReference type="GO" id="GO:0043093">
    <property type="term" value="P:FtsZ-dependent cytokinesis"/>
    <property type="evidence" value="ECO:0007669"/>
    <property type="project" value="UniProtKB-UniRule"/>
</dbReference>
<dbReference type="GO" id="GO:0009252">
    <property type="term" value="P:peptidoglycan biosynthetic process"/>
    <property type="evidence" value="ECO:0007669"/>
    <property type="project" value="UniProtKB-UniRule"/>
</dbReference>
<dbReference type="GO" id="GO:0008360">
    <property type="term" value="P:regulation of cell shape"/>
    <property type="evidence" value="ECO:0007669"/>
    <property type="project" value="UniProtKB-KW"/>
</dbReference>
<dbReference type="HAMAP" id="MF_00913">
    <property type="entry name" value="PGT_FtsW_proteobact"/>
    <property type="match status" value="1"/>
</dbReference>
<dbReference type="InterPro" id="IPR018365">
    <property type="entry name" value="Cell_cycle_FtsW-rel_CS"/>
</dbReference>
<dbReference type="InterPro" id="IPR013437">
    <property type="entry name" value="FtsW"/>
</dbReference>
<dbReference type="InterPro" id="IPR001182">
    <property type="entry name" value="FtsW/RodA"/>
</dbReference>
<dbReference type="NCBIfam" id="TIGR02614">
    <property type="entry name" value="ftsW"/>
    <property type="match status" value="1"/>
</dbReference>
<dbReference type="PANTHER" id="PTHR30474">
    <property type="entry name" value="CELL CYCLE PROTEIN"/>
    <property type="match status" value="1"/>
</dbReference>
<dbReference type="PANTHER" id="PTHR30474:SF2">
    <property type="entry name" value="PEPTIDOGLYCAN GLYCOSYLTRANSFERASE FTSW-RELATED"/>
    <property type="match status" value="1"/>
</dbReference>
<dbReference type="Pfam" id="PF01098">
    <property type="entry name" value="FTSW_RODA_SPOVE"/>
    <property type="match status" value="1"/>
</dbReference>
<dbReference type="PROSITE" id="PS00428">
    <property type="entry name" value="FTSW_RODA_SPOVE"/>
    <property type="match status" value="1"/>
</dbReference>
<reference key="1">
    <citation type="journal article" date="2006" name="Nat. Biotechnol.">
        <title>Genome sequence of the ubiquitous hydrocarbon-degrading marine bacterium Alcanivorax borkumensis.</title>
        <authorList>
            <person name="Schneiker S."/>
            <person name="Martins dos Santos V.A.P."/>
            <person name="Bartels D."/>
            <person name="Bekel T."/>
            <person name="Brecht M."/>
            <person name="Buhrmester J."/>
            <person name="Chernikova T.N."/>
            <person name="Denaro R."/>
            <person name="Ferrer M."/>
            <person name="Gertler C."/>
            <person name="Goesmann A."/>
            <person name="Golyshina O.V."/>
            <person name="Kaminski F."/>
            <person name="Khachane A.N."/>
            <person name="Lang S."/>
            <person name="Linke B."/>
            <person name="McHardy A.C."/>
            <person name="Meyer F."/>
            <person name="Nechitaylo T."/>
            <person name="Puehler A."/>
            <person name="Regenhardt D."/>
            <person name="Rupp O."/>
            <person name="Sabirova J.S."/>
            <person name="Selbitschka W."/>
            <person name="Yakimov M.M."/>
            <person name="Timmis K.N."/>
            <person name="Vorhoelter F.-J."/>
            <person name="Weidner S."/>
            <person name="Kaiser O."/>
            <person name="Golyshin P.N."/>
        </authorList>
    </citation>
    <scope>NUCLEOTIDE SEQUENCE [LARGE SCALE GENOMIC DNA]</scope>
    <source>
        <strain>ATCC 700651 / DSM 11573 / NCIMB 13689 / SK2</strain>
    </source>
</reference>
<protein>
    <recommendedName>
        <fullName evidence="1">Probable peptidoglycan glycosyltransferase FtsW</fullName>
        <shortName evidence="1">PGT</shortName>
        <ecNumber evidence="1">2.4.99.28</ecNumber>
    </recommendedName>
    <alternativeName>
        <fullName evidence="1">Cell division protein FtsW</fullName>
    </alternativeName>
    <alternativeName>
        <fullName evidence="1">Cell wall polymerase</fullName>
    </alternativeName>
    <alternativeName>
        <fullName evidence="1">Peptidoglycan polymerase</fullName>
        <shortName evidence="1">PG polymerase</shortName>
    </alternativeName>
</protein>
<proteinExistence type="inferred from homology"/>
<evidence type="ECO:0000255" key="1">
    <source>
        <dbReference type="HAMAP-Rule" id="MF_00913"/>
    </source>
</evidence>
<feature type="chain" id="PRO_0000415170" description="Probable peptidoglycan glycosyltransferase FtsW">
    <location>
        <begin position="1"/>
        <end position="385"/>
    </location>
</feature>
<feature type="transmembrane region" description="Helical" evidence="1">
    <location>
        <begin position="18"/>
        <end position="38"/>
    </location>
</feature>
<feature type="transmembrane region" description="Helical" evidence="1">
    <location>
        <begin position="57"/>
        <end position="77"/>
    </location>
</feature>
<feature type="transmembrane region" description="Helical" evidence="1">
    <location>
        <begin position="81"/>
        <end position="101"/>
    </location>
</feature>
<feature type="transmembrane region" description="Helical" evidence="1">
    <location>
        <begin position="111"/>
        <end position="131"/>
    </location>
</feature>
<feature type="transmembrane region" description="Helical" evidence="1">
    <location>
        <begin position="157"/>
        <end position="177"/>
    </location>
</feature>
<feature type="transmembrane region" description="Helical" evidence="1">
    <location>
        <begin position="195"/>
        <end position="215"/>
    </location>
</feature>
<feature type="transmembrane region" description="Helical" evidence="1">
    <location>
        <begin position="280"/>
        <end position="300"/>
    </location>
</feature>
<feature type="transmembrane region" description="Helical" evidence="1">
    <location>
        <begin position="311"/>
        <end position="331"/>
    </location>
</feature>
<feature type="transmembrane region" description="Helical" evidence="1">
    <location>
        <begin position="347"/>
        <end position="367"/>
    </location>
</feature>
<comment type="function">
    <text evidence="1">Peptidoglycan polymerase that is essential for cell division.</text>
</comment>
<comment type="catalytic activity">
    <reaction evidence="1">
        <text>[GlcNAc-(1-&gt;4)-Mur2Ac(oyl-L-Ala-gamma-D-Glu-L-Lys-D-Ala-D-Ala)](n)-di-trans,octa-cis-undecaprenyl diphosphate + beta-D-GlcNAc-(1-&gt;4)-Mur2Ac(oyl-L-Ala-gamma-D-Glu-L-Lys-D-Ala-D-Ala)-di-trans,octa-cis-undecaprenyl diphosphate = [GlcNAc-(1-&gt;4)-Mur2Ac(oyl-L-Ala-gamma-D-Glu-L-Lys-D-Ala-D-Ala)](n+1)-di-trans,octa-cis-undecaprenyl diphosphate + di-trans,octa-cis-undecaprenyl diphosphate + H(+)</text>
        <dbReference type="Rhea" id="RHEA:23708"/>
        <dbReference type="Rhea" id="RHEA-COMP:9602"/>
        <dbReference type="Rhea" id="RHEA-COMP:9603"/>
        <dbReference type="ChEBI" id="CHEBI:15378"/>
        <dbReference type="ChEBI" id="CHEBI:58405"/>
        <dbReference type="ChEBI" id="CHEBI:60033"/>
        <dbReference type="ChEBI" id="CHEBI:78435"/>
        <dbReference type="EC" id="2.4.99.28"/>
    </reaction>
</comment>
<comment type="pathway">
    <text evidence="1">Cell wall biogenesis; peptidoglycan biosynthesis.</text>
</comment>
<comment type="subcellular location">
    <subcellularLocation>
        <location evidence="1">Cell inner membrane</location>
        <topology evidence="1">Multi-pass membrane protein</topology>
    </subcellularLocation>
    <text evidence="1">Localizes to the division septum.</text>
</comment>
<comment type="similarity">
    <text evidence="1">Belongs to the SEDS family. FtsW subfamily.</text>
</comment>
<organism>
    <name type="scientific">Alcanivorax borkumensis (strain ATCC 700651 / DSM 11573 / NCIMB 13689 / SK2)</name>
    <dbReference type="NCBI Taxonomy" id="393595"/>
    <lineage>
        <taxon>Bacteria</taxon>
        <taxon>Pseudomonadati</taxon>
        <taxon>Pseudomonadota</taxon>
        <taxon>Gammaproteobacteria</taxon>
        <taxon>Oceanospirillales</taxon>
        <taxon>Alcanivoracaceae</taxon>
        <taxon>Alcanivorax</taxon>
    </lineage>
</organism>
<sequence length="385" mass="41700">MTERMILKVDHTGIDKPLLWTAILLALAGLVMVSSASLQIAETRLGDPFYYAMRHGIYLALGLGVGAFVYYAVPLALLERLRFVMLPVALVALVMVFIPGLGRTVNGSTRWIALPGLTIQASEIVKLCFVLYLAGYVAQRKAALETEWKAFLLPLGLLGVLMLLLLLEPDFGAVVVLGITAMGMLFLSGVPTLRFLLIGLIAVALGGLVAFAEPYRVARLMTFTDPWADQFGSGYQLTQSLIAFGRGHWFGVGLGNSVQKLFYLPEAHTDFVYAVMSEELGLLGNVALIGGFILLGWRVFRIGHRLEARGLLYHAYLVYGCAFVFCSQAFINLGVNMGLLPTKGLTLPFISYGGSSLLISAVMVGLILRAGAEADHLKARGRAAR</sequence>
<accession>Q0VS03</accession>
<name>FTSW_ALCBS</name>